<organism>
    <name type="scientific">Cronobacter sakazakii (strain ATCC BAA-894)</name>
    <name type="common">Enterobacter sakazakii</name>
    <dbReference type="NCBI Taxonomy" id="290339"/>
    <lineage>
        <taxon>Bacteria</taxon>
        <taxon>Pseudomonadati</taxon>
        <taxon>Pseudomonadota</taxon>
        <taxon>Gammaproteobacteria</taxon>
        <taxon>Enterobacterales</taxon>
        <taxon>Enterobacteriaceae</taxon>
        <taxon>Cronobacter</taxon>
    </lineage>
</organism>
<proteinExistence type="inferred from homology"/>
<accession>A7MNA4</accession>
<comment type="function">
    <text evidence="1">Catalyzes the reversible phosphatidyl group transfer from one phosphatidylglycerol molecule to another to form cardiolipin (CL) (diphosphatidylglycerol) and glycerol.</text>
</comment>
<comment type="catalytic activity">
    <reaction evidence="1">
        <text>2 a 1,2-diacyl-sn-glycero-3-phospho-(1'-sn-glycerol) = a cardiolipin + glycerol</text>
        <dbReference type="Rhea" id="RHEA:31451"/>
        <dbReference type="ChEBI" id="CHEBI:17754"/>
        <dbReference type="ChEBI" id="CHEBI:62237"/>
        <dbReference type="ChEBI" id="CHEBI:64716"/>
    </reaction>
</comment>
<comment type="subcellular location">
    <subcellularLocation>
        <location evidence="1">Cell inner membrane</location>
        <topology evidence="1">Multi-pass membrane protein</topology>
    </subcellularLocation>
</comment>
<comment type="similarity">
    <text evidence="1">Belongs to the phospholipase D family. Cardiolipin synthase subfamily. ClsA sub-subfamily.</text>
</comment>
<dbReference type="EC" id="2.7.8.-" evidence="1"/>
<dbReference type="EMBL" id="CP000783">
    <property type="protein sequence ID" value="ABU76802.1"/>
    <property type="molecule type" value="Genomic_DNA"/>
</dbReference>
<dbReference type="RefSeq" id="WP_007850578.1">
    <property type="nucleotide sequence ID" value="NC_009778.1"/>
</dbReference>
<dbReference type="SMR" id="A7MNA4"/>
<dbReference type="GeneID" id="56730404"/>
<dbReference type="KEGG" id="esa:ESA_01548"/>
<dbReference type="HOGENOM" id="CLU_038053_1_0_6"/>
<dbReference type="Proteomes" id="UP000000260">
    <property type="component" value="Chromosome"/>
</dbReference>
<dbReference type="GO" id="GO:0005886">
    <property type="term" value="C:plasma membrane"/>
    <property type="evidence" value="ECO:0007669"/>
    <property type="project" value="UniProtKB-SubCell"/>
</dbReference>
<dbReference type="GO" id="GO:0008808">
    <property type="term" value="F:cardiolipin synthase activity"/>
    <property type="evidence" value="ECO:0007669"/>
    <property type="project" value="InterPro"/>
</dbReference>
<dbReference type="GO" id="GO:0032049">
    <property type="term" value="P:cardiolipin biosynthetic process"/>
    <property type="evidence" value="ECO:0007669"/>
    <property type="project" value="InterPro"/>
</dbReference>
<dbReference type="CDD" id="cd09152">
    <property type="entry name" value="PLDc_EcCLS_like_1"/>
    <property type="match status" value="1"/>
</dbReference>
<dbReference type="CDD" id="cd09158">
    <property type="entry name" value="PLDc_EcCLS_like_2"/>
    <property type="match status" value="1"/>
</dbReference>
<dbReference type="FunFam" id="3.30.870.10:FF:000002">
    <property type="entry name" value="Cardiolipin synthase A"/>
    <property type="match status" value="1"/>
</dbReference>
<dbReference type="FunFam" id="3.30.870.10:FF:000003">
    <property type="entry name" value="Cardiolipin synthase A"/>
    <property type="match status" value="1"/>
</dbReference>
<dbReference type="Gene3D" id="3.30.870.10">
    <property type="entry name" value="Endonuclease Chain A"/>
    <property type="match status" value="2"/>
</dbReference>
<dbReference type="HAMAP" id="MF_00190">
    <property type="entry name" value="Cardiolipin_synth_ClsA"/>
    <property type="match status" value="1"/>
</dbReference>
<dbReference type="InterPro" id="IPR022924">
    <property type="entry name" value="Cardiolipin_synthase"/>
</dbReference>
<dbReference type="InterPro" id="IPR030840">
    <property type="entry name" value="CL_synthase_A"/>
</dbReference>
<dbReference type="InterPro" id="IPR027379">
    <property type="entry name" value="CLS_N"/>
</dbReference>
<dbReference type="InterPro" id="IPR025202">
    <property type="entry name" value="PLD-like_dom"/>
</dbReference>
<dbReference type="InterPro" id="IPR001736">
    <property type="entry name" value="PLipase_D/transphosphatidylase"/>
</dbReference>
<dbReference type="NCBIfam" id="TIGR04265">
    <property type="entry name" value="bac_cardiolipin"/>
    <property type="match status" value="1"/>
</dbReference>
<dbReference type="PANTHER" id="PTHR21248">
    <property type="entry name" value="CARDIOLIPIN SYNTHASE"/>
    <property type="match status" value="1"/>
</dbReference>
<dbReference type="PANTHER" id="PTHR21248:SF22">
    <property type="entry name" value="PHOSPHOLIPASE D"/>
    <property type="match status" value="1"/>
</dbReference>
<dbReference type="Pfam" id="PF13091">
    <property type="entry name" value="PLDc_2"/>
    <property type="match status" value="2"/>
</dbReference>
<dbReference type="Pfam" id="PF13396">
    <property type="entry name" value="PLDc_N"/>
    <property type="match status" value="1"/>
</dbReference>
<dbReference type="SMART" id="SM00155">
    <property type="entry name" value="PLDc"/>
    <property type="match status" value="2"/>
</dbReference>
<dbReference type="SUPFAM" id="SSF56024">
    <property type="entry name" value="Phospholipase D/nuclease"/>
    <property type="match status" value="2"/>
</dbReference>
<dbReference type="PROSITE" id="PS50035">
    <property type="entry name" value="PLD"/>
    <property type="match status" value="2"/>
</dbReference>
<protein>
    <recommendedName>
        <fullName evidence="1">Cardiolipin synthase A</fullName>
        <shortName evidence="1">CL synthase</shortName>
        <ecNumber evidence="1">2.7.8.-</ecNumber>
    </recommendedName>
</protein>
<name>CLSA_CROS8</name>
<keyword id="KW-0997">Cell inner membrane</keyword>
<keyword id="KW-1003">Cell membrane</keyword>
<keyword id="KW-0444">Lipid biosynthesis</keyword>
<keyword id="KW-0443">Lipid metabolism</keyword>
<keyword id="KW-0472">Membrane</keyword>
<keyword id="KW-0594">Phospholipid biosynthesis</keyword>
<keyword id="KW-1208">Phospholipid metabolism</keyword>
<keyword id="KW-1185">Reference proteome</keyword>
<keyword id="KW-0677">Repeat</keyword>
<keyword id="KW-0808">Transferase</keyword>
<keyword id="KW-0812">Transmembrane</keyword>
<keyword id="KW-1133">Transmembrane helix</keyword>
<reference key="1">
    <citation type="journal article" date="2010" name="PLoS ONE">
        <title>Genome sequence of Cronobacter sakazakii BAA-894 and comparative genomic hybridization analysis with other Cronobacter species.</title>
        <authorList>
            <person name="Kucerova E."/>
            <person name="Clifton S.W."/>
            <person name="Xia X.Q."/>
            <person name="Long F."/>
            <person name="Porwollik S."/>
            <person name="Fulton L."/>
            <person name="Fronick C."/>
            <person name="Minx P."/>
            <person name="Kyung K."/>
            <person name="Warren W."/>
            <person name="Fulton R."/>
            <person name="Feng D."/>
            <person name="Wollam A."/>
            <person name="Shah N."/>
            <person name="Bhonagiri V."/>
            <person name="Nash W.E."/>
            <person name="Hallsworth-Pepin K."/>
            <person name="Wilson R.K."/>
            <person name="McClelland M."/>
            <person name="Forsythe S.J."/>
        </authorList>
    </citation>
    <scope>NUCLEOTIDE SEQUENCE [LARGE SCALE GENOMIC DNA]</scope>
    <source>
        <strain>ATCC BAA-894</strain>
    </source>
</reference>
<gene>
    <name evidence="1" type="primary">clsA</name>
    <name type="synonym">cls</name>
    <name type="ordered locus">ESA_01548</name>
</gene>
<feature type="chain" id="PRO_1000058487" description="Cardiolipin synthase A">
    <location>
        <begin position="1"/>
        <end position="486"/>
    </location>
</feature>
<feature type="transmembrane region" description="Helical" evidence="1">
    <location>
        <begin position="3"/>
        <end position="23"/>
    </location>
</feature>
<feature type="transmembrane region" description="Helical" evidence="1">
    <location>
        <begin position="38"/>
        <end position="58"/>
    </location>
</feature>
<feature type="domain" description="PLD phosphodiesterase 1" evidence="1">
    <location>
        <begin position="219"/>
        <end position="246"/>
    </location>
</feature>
<feature type="domain" description="PLD phosphodiesterase 2" evidence="1">
    <location>
        <begin position="399"/>
        <end position="426"/>
    </location>
</feature>
<feature type="active site" evidence="1">
    <location>
        <position position="224"/>
    </location>
</feature>
<feature type="active site" evidence="1">
    <location>
        <position position="226"/>
    </location>
</feature>
<feature type="active site" evidence="1">
    <location>
        <position position="231"/>
    </location>
</feature>
<feature type="active site" evidence="1">
    <location>
        <position position="404"/>
    </location>
</feature>
<feature type="active site" evidence="1">
    <location>
        <position position="406"/>
    </location>
</feature>
<feature type="active site" evidence="1">
    <location>
        <position position="411"/>
    </location>
</feature>
<sequence length="486" mass="54709">MTTFYTVVSWLIILGYWLLIAGVTLRILMKRRAVPSAMAWLLVIYILPLVGIVAYLSVGELHLGKRRAERARAMWPSTAKWLNDLKACKHIFAEENSAVASALFQLCERRQGIAGVKGNQLQLLTSSDDVMQALIRDIQLARHNIEMVFYIWQPGGMADQVAESLMAAARRGVHCRLMLDSAGSVAFFRSPWAGMMRNAGIEVVEALKVNLMRVFLRRMDLRQHRKMIMIDNYIAYTGSMNMVDPRYFKQDAGVGQWVDLMARMEGPVATAMGIVYSCDWEIETGKRLLPPPPDANIMPFEQASGHTIHTIASGPGFPEDLIHQALLTSVYAAREYLIMTTPYFVPSDDLLHAICTAAQRGVDVSIILPRKNDSLLVGWASRAFFSELLAAGVKIYQFEGGLLHTKSVLVDGELSLVGTVNLDMRSLWLNFEITLVIDDAGFGADLAEVQDDYISRSRLLDARLWVKRPFWQRVVERLFYFFSPLL</sequence>
<evidence type="ECO:0000255" key="1">
    <source>
        <dbReference type="HAMAP-Rule" id="MF_00190"/>
    </source>
</evidence>